<keyword id="KW-0119">Carbohydrate metabolism</keyword>
<keyword id="KW-0456">Lyase</keyword>
<keyword id="KW-1185">Reference proteome</keyword>
<reference key="1">
    <citation type="submission" date="2008-02" db="EMBL/GenBank/DDBJ databases">
        <title>Complete sequence of Synechococcus sp. PCC 7002.</title>
        <authorList>
            <person name="Li T."/>
            <person name="Zhao J."/>
            <person name="Zhao C."/>
            <person name="Liu Z."/>
            <person name="Zhao F."/>
            <person name="Marquardt J."/>
            <person name="Nomura C.T."/>
            <person name="Persson S."/>
            <person name="Detter J.C."/>
            <person name="Richardson P.M."/>
            <person name="Lanz C."/>
            <person name="Schuster S.C."/>
            <person name="Wang J."/>
            <person name="Li S."/>
            <person name="Huang X."/>
            <person name="Cai T."/>
            <person name="Yu Z."/>
            <person name="Luo J."/>
            <person name="Zhao J."/>
            <person name="Bryant D.A."/>
        </authorList>
    </citation>
    <scope>NUCLEOTIDE SEQUENCE [LARGE SCALE GENOMIC DNA]</scope>
    <source>
        <strain>ATCC 27264 / PCC 7002 / PR-6</strain>
    </source>
</reference>
<feature type="chain" id="PRO_1000092320" description="N-acetylmuramic acid 6-phosphate etherase">
    <location>
        <begin position="1"/>
        <end position="301"/>
    </location>
</feature>
<feature type="domain" description="SIS" evidence="1">
    <location>
        <begin position="59"/>
        <end position="222"/>
    </location>
</feature>
<feature type="active site" description="Proton donor" evidence="1">
    <location>
        <position position="87"/>
    </location>
</feature>
<feature type="active site" evidence="1">
    <location>
        <position position="118"/>
    </location>
</feature>
<comment type="function">
    <text evidence="1">Specifically catalyzes the cleavage of the D-lactyl ether substituent of MurNAc 6-phosphate, producing GlcNAc 6-phosphate and D-lactate.</text>
</comment>
<comment type="catalytic activity">
    <reaction evidence="1">
        <text>N-acetyl-D-muramate 6-phosphate + H2O = N-acetyl-D-glucosamine 6-phosphate + (R)-lactate</text>
        <dbReference type="Rhea" id="RHEA:26410"/>
        <dbReference type="ChEBI" id="CHEBI:15377"/>
        <dbReference type="ChEBI" id="CHEBI:16004"/>
        <dbReference type="ChEBI" id="CHEBI:57513"/>
        <dbReference type="ChEBI" id="CHEBI:58722"/>
        <dbReference type="EC" id="4.2.1.126"/>
    </reaction>
</comment>
<comment type="pathway">
    <text evidence="1">Amino-sugar metabolism; N-acetylmuramate degradation.</text>
</comment>
<comment type="subunit">
    <text evidence="1">Homodimer.</text>
</comment>
<comment type="miscellaneous">
    <text evidence="1">A lyase-type mechanism (elimination/hydration) is suggested for the cleavage of the lactyl ether bond of MurNAc 6-phosphate, with the formation of an alpha,beta-unsaturated aldehyde intermediate with (E)-stereochemistry, followed by the syn addition of water to give product.</text>
</comment>
<comment type="similarity">
    <text evidence="1">Belongs to the GCKR-like family. MurNAc-6-P etherase subfamily.</text>
</comment>
<organism>
    <name type="scientific">Picosynechococcus sp. (strain ATCC 27264 / PCC 7002 / PR-6)</name>
    <name type="common">Agmenellum quadruplicatum</name>
    <dbReference type="NCBI Taxonomy" id="32049"/>
    <lineage>
        <taxon>Bacteria</taxon>
        <taxon>Bacillati</taxon>
        <taxon>Cyanobacteriota</taxon>
        <taxon>Cyanophyceae</taxon>
        <taxon>Oscillatoriophycideae</taxon>
        <taxon>Chroococcales</taxon>
        <taxon>Geminocystaceae</taxon>
        <taxon>Picosynechococcus</taxon>
    </lineage>
</organism>
<sequence length="301" mass="32380">MNSYESRGHLLTEQVNPQSQNLDQMSALELVDLFNQEDQKTLEAIANAREALAQAIEITSEALMHGGRLFYVGAGTSGRLGVLDAAECPPTFCTPPELVQGIIAGGAGALVRSSEDLEDRAEDGKKAIAQRQITELDVVVGITAGGTTPYVQGALIAAQQRGAKTIFISCVPAEQVPFAAAVDIRLLTGPEILAGSTRLKAGTVTKMALNILSTSVMVKLGKVYGNRMIDVAVTNHKLHDRALRILQDLTDLSREEAAILLEKSQRRVKIALLMHWKNVDASEAEHLLKVHQGSLRTALKS</sequence>
<protein>
    <recommendedName>
        <fullName evidence="1">N-acetylmuramic acid 6-phosphate etherase</fullName>
        <shortName evidence="1">MurNAc-6-P etherase</shortName>
        <ecNumber evidence="1">4.2.1.126</ecNumber>
    </recommendedName>
    <alternativeName>
        <fullName evidence="1">N-acetylmuramic acid 6-phosphate hydrolase</fullName>
    </alternativeName>
    <alternativeName>
        <fullName evidence="1">N-acetylmuramic acid 6-phosphate lyase</fullName>
    </alternativeName>
</protein>
<evidence type="ECO:0000255" key="1">
    <source>
        <dbReference type="HAMAP-Rule" id="MF_00068"/>
    </source>
</evidence>
<proteinExistence type="inferred from homology"/>
<name>MURQ_PICP2</name>
<dbReference type="EC" id="4.2.1.126" evidence="1"/>
<dbReference type="EMBL" id="CP000951">
    <property type="protein sequence ID" value="ACA99413.1"/>
    <property type="molecule type" value="Genomic_DNA"/>
</dbReference>
<dbReference type="RefSeq" id="WP_012307036.1">
    <property type="nucleotide sequence ID" value="NZ_JAHHPU010000007.1"/>
</dbReference>
<dbReference type="SMR" id="B1XMC7"/>
<dbReference type="STRING" id="32049.SYNPCC7002_A1422"/>
<dbReference type="KEGG" id="syp:SYNPCC7002_A1422"/>
<dbReference type="eggNOG" id="COG2103">
    <property type="taxonomic scope" value="Bacteria"/>
</dbReference>
<dbReference type="HOGENOM" id="CLU_049049_1_1_3"/>
<dbReference type="UniPathway" id="UPA00342"/>
<dbReference type="Proteomes" id="UP000001688">
    <property type="component" value="Chromosome"/>
</dbReference>
<dbReference type="GO" id="GO:0097367">
    <property type="term" value="F:carbohydrate derivative binding"/>
    <property type="evidence" value="ECO:0007669"/>
    <property type="project" value="InterPro"/>
</dbReference>
<dbReference type="GO" id="GO:0016835">
    <property type="term" value="F:carbon-oxygen lyase activity"/>
    <property type="evidence" value="ECO:0007669"/>
    <property type="project" value="UniProtKB-UniRule"/>
</dbReference>
<dbReference type="GO" id="GO:0016803">
    <property type="term" value="F:ether hydrolase activity"/>
    <property type="evidence" value="ECO:0007669"/>
    <property type="project" value="TreeGrafter"/>
</dbReference>
<dbReference type="GO" id="GO:0046348">
    <property type="term" value="P:amino sugar catabolic process"/>
    <property type="evidence" value="ECO:0007669"/>
    <property type="project" value="InterPro"/>
</dbReference>
<dbReference type="GO" id="GO:0097173">
    <property type="term" value="P:N-acetylmuramic acid catabolic process"/>
    <property type="evidence" value="ECO:0007669"/>
    <property type="project" value="UniProtKB-UniPathway"/>
</dbReference>
<dbReference type="GO" id="GO:0009254">
    <property type="term" value="P:peptidoglycan turnover"/>
    <property type="evidence" value="ECO:0007669"/>
    <property type="project" value="TreeGrafter"/>
</dbReference>
<dbReference type="CDD" id="cd05007">
    <property type="entry name" value="SIS_Etherase"/>
    <property type="match status" value="1"/>
</dbReference>
<dbReference type="FunFam" id="1.10.8.1080:FF:000001">
    <property type="entry name" value="N-acetylmuramic acid 6-phosphate etherase"/>
    <property type="match status" value="1"/>
</dbReference>
<dbReference type="FunFam" id="3.40.50.10490:FF:000014">
    <property type="entry name" value="N-acetylmuramic acid 6-phosphate etherase"/>
    <property type="match status" value="1"/>
</dbReference>
<dbReference type="Gene3D" id="1.10.8.1080">
    <property type="match status" value="1"/>
</dbReference>
<dbReference type="Gene3D" id="3.40.50.10490">
    <property type="entry name" value="Glucose-6-phosphate isomerase like protein, domain 1"/>
    <property type="match status" value="1"/>
</dbReference>
<dbReference type="HAMAP" id="MF_00068">
    <property type="entry name" value="MurQ"/>
    <property type="match status" value="1"/>
</dbReference>
<dbReference type="InterPro" id="IPR005488">
    <property type="entry name" value="Etherase_MurQ"/>
</dbReference>
<dbReference type="InterPro" id="IPR005486">
    <property type="entry name" value="Glucokinase_regulatory_CS"/>
</dbReference>
<dbReference type="InterPro" id="IPR040190">
    <property type="entry name" value="MURQ/GCKR"/>
</dbReference>
<dbReference type="InterPro" id="IPR001347">
    <property type="entry name" value="SIS_dom"/>
</dbReference>
<dbReference type="InterPro" id="IPR046348">
    <property type="entry name" value="SIS_dom_sf"/>
</dbReference>
<dbReference type="NCBIfam" id="TIGR00274">
    <property type="entry name" value="N-acetylmuramic acid 6-phosphate etherase"/>
    <property type="match status" value="1"/>
</dbReference>
<dbReference type="NCBIfam" id="NF003915">
    <property type="entry name" value="PRK05441.1"/>
    <property type="match status" value="1"/>
</dbReference>
<dbReference type="NCBIfam" id="NF009222">
    <property type="entry name" value="PRK12570.1"/>
    <property type="match status" value="1"/>
</dbReference>
<dbReference type="PANTHER" id="PTHR10088">
    <property type="entry name" value="GLUCOKINASE REGULATORY PROTEIN"/>
    <property type="match status" value="1"/>
</dbReference>
<dbReference type="PANTHER" id="PTHR10088:SF4">
    <property type="entry name" value="GLUCOKINASE REGULATORY PROTEIN"/>
    <property type="match status" value="1"/>
</dbReference>
<dbReference type="Pfam" id="PF20741">
    <property type="entry name" value="GKRP-like_C"/>
    <property type="match status" value="1"/>
</dbReference>
<dbReference type="Pfam" id="PF22645">
    <property type="entry name" value="GKRP_SIS_N"/>
    <property type="match status" value="1"/>
</dbReference>
<dbReference type="SUPFAM" id="SSF53697">
    <property type="entry name" value="SIS domain"/>
    <property type="match status" value="1"/>
</dbReference>
<dbReference type="PROSITE" id="PS01272">
    <property type="entry name" value="GCKR"/>
    <property type="match status" value="1"/>
</dbReference>
<dbReference type="PROSITE" id="PS51464">
    <property type="entry name" value="SIS"/>
    <property type="match status" value="1"/>
</dbReference>
<accession>B1XMC7</accession>
<gene>
    <name evidence="1" type="primary">murQ</name>
    <name type="ordered locus">SYNPCC7002_A1422</name>
</gene>